<evidence type="ECO:0000255" key="1">
    <source>
        <dbReference type="HAMAP-Rule" id="MF_00815"/>
    </source>
</evidence>
<name>ATPG_ALLAM</name>
<dbReference type="EMBL" id="CP000633">
    <property type="protein sequence ID" value="ACM37971.1"/>
    <property type="molecule type" value="Genomic_DNA"/>
</dbReference>
<dbReference type="RefSeq" id="WP_015917382.1">
    <property type="nucleotide sequence ID" value="NC_011989.1"/>
</dbReference>
<dbReference type="SMR" id="B9JTR3"/>
<dbReference type="STRING" id="311402.Avi_4107"/>
<dbReference type="KEGG" id="avi:Avi_4107"/>
<dbReference type="eggNOG" id="COG0224">
    <property type="taxonomic scope" value="Bacteria"/>
</dbReference>
<dbReference type="HOGENOM" id="CLU_050669_0_1_5"/>
<dbReference type="Proteomes" id="UP000001596">
    <property type="component" value="Chromosome 1"/>
</dbReference>
<dbReference type="GO" id="GO:0005886">
    <property type="term" value="C:plasma membrane"/>
    <property type="evidence" value="ECO:0007669"/>
    <property type="project" value="UniProtKB-SubCell"/>
</dbReference>
<dbReference type="GO" id="GO:0045259">
    <property type="term" value="C:proton-transporting ATP synthase complex"/>
    <property type="evidence" value="ECO:0007669"/>
    <property type="project" value="UniProtKB-KW"/>
</dbReference>
<dbReference type="GO" id="GO:0005524">
    <property type="term" value="F:ATP binding"/>
    <property type="evidence" value="ECO:0007669"/>
    <property type="project" value="UniProtKB-UniRule"/>
</dbReference>
<dbReference type="GO" id="GO:0046933">
    <property type="term" value="F:proton-transporting ATP synthase activity, rotational mechanism"/>
    <property type="evidence" value="ECO:0007669"/>
    <property type="project" value="UniProtKB-UniRule"/>
</dbReference>
<dbReference type="GO" id="GO:0042777">
    <property type="term" value="P:proton motive force-driven plasma membrane ATP synthesis"/>
    <property type="evidence" value="ECO:0007669"/>
    <property type="project" value="UniProtKB-UniRule"/>
</dbReference>
<dbReference type="CDD" id="cd12151">
    <property type="entry name" value="F1-ATPase_gamma"/>
    <property type="match status" value="1"/>
</dbReference>
<dbReference type="FunFam" id="1.10.287.80:FF:000001">
    <property type="entry name" value="ATP synthase gamma chain"/>
    <property type="match status" value="1"/>
</dbReference>
<dbReference type="FunFam" id="1.10.287.80:FF:000003">
    <property type="entry name" value="ATP synthase gamma chain, chloroplastic"/>
    <property type="match status" value="1"/>
</dbReference>
<dbReference type="Gene3D" id="3.40.1380.10">
    <property type="match status" value="1"/>
</dbReference>
<dbReference type="Gene3D" id="1.10.287.80">
    <property type="entry name" value="ATP synthase, gamma subunit, helix hairpin domain"/>
    <property type="match status" value="1"/>
</dbReference>
<dbReference type="HAMAP" id="MF_00815">
    <property type="entry name" value="ATP_synth_gamma_bact"/>
    <property type="match status" value="1"/>
</dbReference>
<dbReference type="InterPro" id="IPR035968">
    <property type="entry name" value="ATP_synth_F1_ATPase_gsu"/>
</dbReference>
<dbReference type="InterPro" id="IPR000131">
    <property type="entry name" value="ATP_synth_F1_gsu"/>
</dbReference>
<dbReference type="InterPro" id="IPR023632">
    <property type="entry name" value="ATP_synth_F1_gsu_CS"/>
</dbReference>
<dbReference type="NCBIfam" id="TIGR01146">
    <property type="entry name" value="ATPsyn_F1gamma"/>
    <property type="match status" value="1"/>
</dbReference>
<dbReference type="NCBIfam" id="NF004146">
    <property type="entry name" value="PRK05621.1-4"/>
    <property type="match status" value="1"/>
</dbReference>
<dbReference type="PANTHER" id="PTHR11693">
    <property type="entry name" value="ATP SYNTHASE GAMMA CHAIN"/>
    <property type="match status" value="1"/>
</dbReference>
<dbReference type="PANTHER" id="PTHR11693:SF22">
    <property type="entry name" value="ATP SYNTHASE SUBUNIT GAMMA, MITOCHONDRIAL"/>
    <property type="match status" value="1"/>
</dbReference>
<dbReference type="Pfam" id="PF00231">
    <property type="entry name" value="ATP-synt"/>
    <property type="match status" value="1"/>
</dbReference>
<dbReference type="PIRSF" id="PIRSF039089">
    <property type="entry name" value="ATP_synthase_gamma"/>
    <property type="match status" value="1"/>
</dbReference>
<dbReference type="PRINTS" id="PR00126">
    <property type="entry name" value="ATPASEGAMMA"/>
</dbReference>
<dbReference type="SUPFAM" id="SSF52943">
    <property type="entry name" value="ATP synthase (F1-ATPase), gamma subunit"/>
    <property type="match status" value="1"/>
</dbReference>
<dbReference type="PROSITE" id="PS00153">
    <property type="entry name" value="ATPASE_GAMMA"/>
    <property type="match status" value="1"/>
</dbReference>
<accession>B9JTR3</accession>
<feature type="chain" id="PRO_1000148594" description="ATP synthase gamma chain">
    <location>
        <begin position="1"/>
        <end position="293"/>
    </location>
</feature>
<comment type="function">
    <text evidence="1">Produces ATP from ADP in the presence of a proton gradient across the membrane. The gamma chain is believed to be important in regulating ATPase activity and the flow of protons through the CF(0) complex.</text>
</comment>
<comment type="subunit">
    <text evidence="1">F-type ATPases have 2 components, CF(1) - the catalytic core - and CF(0) - the membrane proton channel. CF(1) has five subunits: alpha(3), beta(3), gamma(1), delta(1), epsilon(1). CF(0) has three main subunits: a, b and c.</text>
</comment>
<comment type="subcellular location">
    <subcellularLocation>
        <location evidence="1">Cell inner membrane</location>
        <topology evidence="1">Peripheral membrane protein</topology>
    </subcellularLocation>
</comment>
<comment type="similarity">
    <text evidence="1">Belongs to the ATPase gamma chain family.</text>
</comment>
<reference key="1">
    <citation type="journal article" date="2009" name="J. Bacteriol.">
        <title>Genome sequences of three Agrobacterium biovars help elucidate the evolution of multichromosome genomes in bacteria.</title>
        <authorList>
            <person name="Slater S.C."/>
            <person name="Goldman B.S."/>
            <person name="Goodner B."/>
            <person name="Setubal J.C."/>
            <person name="Farrand S.K."/>
            <person name="Nester E.W."/>
            <person name="Burr T.J."/>
            <person name="Banta L."/>
            <person name="Dickerman A.W."/>
            <person name="Paulsen I."/>
            <person name="Otten L."/>
            <person name="Suen G."/>
            <person name="Welch R."/>
            <person name="Almeida N.F."/>
            <person name="Arnold F."/>
            <person name="Burton O.T."/>
            <person name="Du Z."/>
            <person name="Ewing A."/>
            <person name="Godsy E."/>
            <person name="Heisel S."/>
            <person name="Houmiel K.L."/>
            <person name="Jhaveri J."/>
            <person name="Lu J."/>
            <person name="Miller N.M."/>
            <person name="Norton S."/>
            <person name="Chen Q."/>
            <person name="Phoolcharoen W."/>
            <person name="Ohlin V."/>
            <person name="Ondrusek D."/>
            <person name="Pride N."/>
            <person name="Stricklin S.L."/>
            <person name="Sun J."/>
            <person name="Wheeler C."/>
            <person name="Wilson L."/>
            <person name="Zhu H."/>
            <person name="Wood D.W."/>
        </authorList>
    </citation>
    <scope>NUCLEOTIDE SEQUENCE [LARGE SCALE GENOMIC DNA]</scope>
    <source>
        <strain>ATCC BAA-846 / DSM 112012 / S4</strain>
    </source>
</reference>
<sequence length="293" mass="31660">MPSLKDLKNRIASVKATQKITKAMKMVAAAKLRRAQEAAEAARPYSQRMGAVLANIAQAVGSDDGVSTLMTGTGKDDVHLLVVCTAERGLCGGFNSQISRFARDHVRSLLAAGKTVKIYCVGKKGYDSLRREFGALIVERTEFREVKRVAFENADTVARKVISMFDKGEFDVCTLFYSEFKSVISQIPTARQLIPAAVGDAPAASSSAAAIYDYEPDAASILSDLIPRNIAVQIFRALLENAAGEMGAKMSAMDNATRNAGEMINKLTLSYNRQRQAKITTELIEIIAGAEAL</sequence>
<organism>
    <name type="scientific">Allorhizobium ampelinum (strain ATCC BAA-846 / DSM 112012 / S4)</name>
    <name type="common">Agrobacterium vitis (strain S4)</name>
    <dbReference type="NCBI Taxonomy" id="311402"/>
    <lineage>
        <taxon>Bacteria</taxon>
        <taxon>Pseudomonadati</taxon>
        <taxon>Pseudomonadota</taxon>
        <taxon>Alphaproteobacteria</taxon>
        <taxon>Hyphomicrobiales</taxon>
        <taxon>Rhizobiaceae</taxon>
        <taxon>Rhizobium/Agrobacterium group</taxon>
        <taxon>Allorhizobium</taxon>
        <taxon>Allorhizobium ampelinum</taxon>
    </lineage>
</organism>
<gene>
    <name evidence="1" type="primary">atpG</name>
    <name type="ordered locus">Avi_4107</name>
</gene>
<proteinExistence type="inferred from homology"/>
<keyword id="KW-0066">ATP synthesis</keyword>
<keyword id="KW-0997">Cell inner membrane</keyword>
<keyword id="KW-1003">Cell membrane</keyword>
<keyword id="KW-0139">CF(1)</keyword>
<keyword id="KW-0375">Hydrogen ion transport</keyword>
<keyword id="KW-0406">Ion transport</keyword>
<keyword id="KW-0472">Membrane</keyword>
<keyword id="KW-1185">Reference proteome</keyword>
<keyword id="KW-0813">Transport</keyword>
<protein>
    <recommendedName>
        <fullName evidence="1">ATP synthase gamma chain</fullName>
    </recommendedName>
    <alternativeName>
        <fullName evidence="1">ATP synthase F1 sector gamma subunit</fullName>
    </alternativeName>
    <alternativeName>
        <fullName evidence="1">F-ATPase gamma subunit</fullName>
    </alternativeName>
</protein>